<protein>
    <recommendedName>
        <fullName evidence="1">Small ribosomal subunit protein uS17</fullName>
    </recommendedName>
    <alternativeName>
        <fullName evidence="2">30S ribosomal protein S17</fullName>
    </alternativeName>
</protein>
<evidence type="ECO:0000255" key="1">
    <source>
        <dbReference type="HAMAP-Rule" id="MF_01345"/>
    </source>
</evidence>
<evidence type="ECO:0000305" key="2"/>
<comment type="function">
    <text evidence="1">One of the primary rRNA binding proteins, it binds specifically to the 5'-end of 16S ribosomal RNA.</text>
</comment>
<comment type="subunit">
    <text evidence="1">Part of the 30S ribosomal subunit.</text>
</comment>
<comment type="similarity">
    <text evidence="1">Belongs to the universal ribosomal protein uS17 family.</text>
</comment>
<name>RS17_GEOSM</name>
<proteinExistence type="inferred from homology"/>
<organism>
    <name type="scientific">Geobacter sp. (strain M21)</name>
    <dbReference type="NCBI Taxonomy" id="443144"/>
    <lineage>
        <taxon>Bacteria</taxon>
        <taxon>Pseudomonadati</taxon>
        <taxon>Thermodesulfobacteriota</taxon>
        <taxon>Desulfuromonadia</taxon>
        <taxon>Geobacterales</taxon>
        <taxon>Geobacteraceae</taxon>
        <taxon>Geobacter</taxon>
    </lineage>
</organism>
<accession>C6E4P8</accession>
<keyword id="KW-0687">Ribonucleoprotein</keyword>
<keyword id="KW-0689">Ribosomal protein</keyword>
<keyword id="KW-0694">RNA-binding</keyword>
<keyword id="KW-0699">rRNA-binding</keyword>
<gene>
    <name evidence="1" type="primary">rpsQ</name>
    <name type="ordered locus">GM21_3319</name>
</gene>
<feature type="chain" id="PRO_1000214785" description="Small ribosomal subunit protein uS17">
    <location>
        <begin position="1"/>
        <end position="85"/>
    </location>
</feature>
<reference key="1">
    <citation type="submission" date="2009-07" db="EMBL/GenBank/DDBJ databases">
        <title>Complete sequence of Geobacter sp. M21.</title>
        <authorList>
            <consortium name="US DOE Joint Genome Institute"/>
            <person name="Lucas S."/>
            <person name="Copeland A."/>
            <person name="Lapidus A."/>
            <person name="Glavina del Rio T."/>
            <person name="Dalin E."/>
            <person name="Tice H."/>
            <person name="Bruce D."/>
            <person name="Goodwin L."/>
            <person name="Pitluck S."/>
            <person name="Saunders E."/>
            <person name="Brettin T."/>
            <person name="Detter J.C."/>
            <person name="Han C."/>
            <person name="Larimer F."/>
            <person name="Land M."/>
            <person name="Hauser L."/>
            <person name="Kyrpides N."/>
            <person name="Ovchinnikova G."/>
            <person name="Lovley D."/>
        </authorList>
    </citation>
    <scope>NUCLEOTIDE SEQUENCE [LARGE SCALE GENOMIC DNA]</scope>
    <source>
        <strain>M21</strain>
    </source>
</reference>
<dbReference type="EMBL" id="CP001661">
    <property type="protein sequence ID" value="ACT19344.1"/>
    <property type="molecule type" value="Genomic_DNA"/>
</dbReference>
<dbReference type="SMR" id="C6E4P8"/>
<dbReference type="STRING" id="443144.GM21_3319"/>
<dbReference type="KEGG" id="gem:GM21_3319"/>
<dbReference type="eggNOG" id="COG0186">
    <property type="taxonomic scope" value="Bacteria"/>
</dbReference>
<dbReference type="HOGENOM" id="CLU_073626_1_0_7"/>
<dbReference type="OrthoDB" id="9811714at2"/>
<dbReference type="GO" id="GO:0022627">
    <property type="term" value="C:cytosolic small ribosomal subunit"/>
    <property type="evidence" value="ECO:0007669"/>
    <property type="project" value="TreeGrafter"/>
</dbReference>
<dbReference type="GO" id="GO:0019843">
    <property type="term" value="F:rRNA binding"/>
    <property type="evidence" value="ECO:0007669"/>
    <property type="project" value="UniProtKB-UniRule"/>
</dbReference>
<dbReference type="GO" id="GO:0003735">
    <property type="term" value="F:structural constituent of ribosome"/>
    <property type="evidence" value="ECO:0007669"/>
    <property type="project" value="InterPro"/>
</dbReference>
<dbReference type="GO" id="GO:0006412">
    <property type="term" value="P:translation"/>
    <property type="evidence" value="ECO:0007669"/>
    <property type="project" value="UniProtKB-UniRule"/>
</dbReference>
<dbReference type="CDD" id="cd00364">
    <property type="entry name" value="Ribosomal_uS17"/>
    <property type="match status" value="1"/>
</dbReference>
<dbReference type="Gene3D" id="2.40.50.140">
    <property type="entry name" value="Nucleic acid-binding proteins"/>
    <property type="match status" value="1"/>
</dbReference>
<dbReference type="HAMAP" id="MF_01345_B">
    <property type="entry name" value="Ribosomal_uS17_B"/>
    <property type="match status" value="1"/>
</dbReference>
<dbReference type="InterPro" id="IPR012340">
    <property type="entry name" value="NA-bd_OB-fold"/>
</dbReference>
<dbReference type="InterPro" id="IPR000266">
    <property type="entry name" value="Ribosomal_uS17"/>
</dbReference>
<dbReference type="InterPro" id="IPR019984">
    <property type="entry name" value="Ribosomal_uS17_bact/chlr"/>
</dbReference>
<dbReference type="InterPro" id="IPR019979">
    <property type="entry name" value="Ribosomal_uS17_CS"/>
</dbReference>
<dbReference type="NCBIfam" id="NF004123">
    <property type="entry name" value="PRK05610.1"/>
    <property type="match status" value="1"/>
</dbReference>
<dbReference type="NCBIfam" id="TIGR03635">
    <property type="entry name" value="uS17_bact"/>
    <property type="match status" value="1"/>
</dbReference>
<dbReference type="PANTHER" id="PTHR10744">
    <property type="entry name" value="40S RIBOSOMAL PROTEIN S11 FAMILY MEMBER"/>
    <property type="match status" value="1"/>
</dbReference>
<dbReference type="PANTHER" id="PTHR10744:SF1">
    <property type="entry name" value="SMALL RIBOSOMAL SUBUNIT PROTEIN US17M"/>
    <property type="match status" value="1"/>
</dbReference>
<dbReference type="Pfam" id="PF00366">
    <property type="entry name" value="Ribosomal_S17"/>
    <property type="match status" value="1"/>
</dbReference>
<dbReference type="PRINTS" id="PR00973">
    <property type="entry name" value="RIBOSOMALS17"/>
</dbReference>
<dbReference type="SUPFAM" id="SSF50249">
    <property type="entry name" value="Nucleic acid-binding proteins"/>
    <property type="match status" value="1"/>
</dbReference>
<dbReference type="PROSITE" id="PS00056">
    <property type="entry name" value="RIBOSOMAL_S17"/>
    <property type="match status" value="1"/>
</dbReference>
<sequence>MSERGNRKTQVGVVVSDKMDKTAVVKVDRLVKHPVYNKYIKRSAKYKAHDMDNAAKIGDRVIIVETRPLSKDKRWKIRQIIESKA</sequence>